<comment type="subunit">
    <text evidence="1">Component of the small ribosomal subunit. Mature ribosomes consist of a small (40S) and a large (60S) subunit. The 40S subunit contains about 33 different proteins and 1 molecule of RNA (18S). The 60S subunit contains about 49 different proteins and 3 molecules of RNA (25S, 5.8S and 5S).</text>
</comment>
<comment type="subcellular location">
    <subcellularLocation>
        <location evidence="1">Cytoplasm</location>
    </subcellularLocation>
</comment>
<comment type="similarity">
    <text evidence="1">Belongs to the eukaryotic ribosomal protein eS1 family.</text>
</comment>
<sequence length="256" mass="29259">MAVGKNKRLSKGKKGLKKKTLDPFTRKDWYQIKAPSSFQIRDVGKTLVNRTTGLKNANDSLKGRIIEVSLADLQKDEDHAFRKVKLRVDEVQGKNCLTNFHGLDFTSDKLRSLVRKWQSLIEANITVKTTDDYLLRLFAIAFTKRRPNQIKKTTYAASSQIRAIRKKMTEIIQREASTCTLTQLTAKLIPEVIGREIEKATQGIYPLQNVHIRKVKLLKAPKFDLGALLNLHGESNTDEQGQKVEREFKEKVLEQV</sequence>
<gene>
    <name type="primary">rps1</name>
    <name type="ORF">SS1G_00195</name>
</gene>
<accession>A7E4H3</accession>
<name>RS3A_SCLS1</name>
<feature type="initiator methionine" description="Removed" evidence="1">
    <location>
        <position position="1"/>
    </location>
</feature>
<feature type="chain" id="PRO_0000389413" description="Small ribosomal subunit protein eS1">
    <location>
        <begin position="2"/>
        <end position="256"/>
    </location>
</feature>
<feature type="modified residue" description="N-acetylalanine; partial" evidence="1">
    <location>
        <position position="2"/>
    </location>
</feature>
<reference key="1">
    <citation type="journal article" date="2011" name="PLoS Genet.">
        <title>Genomic analysis of the necrotrophic fungal pathogens Sclerotinia sclerotiorum and Botrytis cinerea.</title>
        <authorList>
            <person name="Amselem J."/>
            <person name="Cuomo C.A."/>
            <person name="van Kan J.A.L."/>
            <person name="Viaud M."/>
            <person name="Benito E.P."/>
            <person name="Couloux A."/>
            <person name="Coutinho P.M."/>
            <person name="de Vries R.P."/>
            <person name="Dyer P.S."/>
            <person name="Fillinger S."/>
            <person name="Fournier E."/>
            <person name="Gout L."/>
            <person name="Hahn M."/>
            <person name="Kohn L."/>
            <person name="Lapalu N."/>
            <person name="Plummer K.M."/>
            <person name="Pradier J.-M."/>
            <person name="Quevillon E."/>
            <person name="Sharon A."/>
            <person name="Simon A."/>
            <person name="ten Have A."/>
            <person name="Tudzynski B."/>
            <person name="Tudzynski P."/>
            <person name="Wincker P."/>
            <person name="Andrew M."/>
            <person name="Anthouard V."/>
            <person name="Beever R.E."/>
            <person name="Beffa R."/>
            <person name="Benoit I."/>
            <person name="Bouzid O."/>
            <person name="Brault B."/>
            <person name="Chen Z."/>
            <person name="Choquer M."/>
            <person name="Collemare J."/>
            <person name="Cotton P."/>
            <person name="Danchin E.G."/>
            <person name="Da Silva C."/>
            <person name="Gautier A."/>
            <person name="Giraud C."/>
            <person name="Giraud T."/>
            <person name="Gonzalez C."/>
            <person name="Grossetete S."/>
            <person name="Gueldener U."/>
            <person name="Henrissat B."/>
            <person name="Howlett B.J."/>
            <person name="Kodira C."/>
            <person name="Kretschmer M."/>
            <person name="Lappartient A."/>
            <person name="Leroch M."/>
            <person name="Levis C."/>
            <person name="Mauceli E."/>
            <person name="Neuveglise C."/>
            <person name="Oeser B."/>
            <person name="Pearson M."/>
            <person name="Poulain J."/>
            <person name="Poussereau N."/>
            <person name="Quesneville H."/>
            <person name="Rascle C."/>
            <person name="Schumacher J."/>
            <person name="Segurens B."/>
            <person name="Sexton A."/>
            <person name="Silva E."/>
            <person name="Sirven C."/>
            <person name="Soanes D.M."/>
            <person name="Talbot N.J."/>
            <person name="Templeton M."/>
            <person name="Yandava C."/>
            <person name="Yarden O."/>
            <person name="Zeng Q."/>
            <person name="Rollins J.A."/>
            <person name="Lebrun M.-H."/>
            <person name="Dickman M."/>
        </authorList>
    </citation>
    <scope>NUCLEOTIDE SEQUENCE [LARGE SCALE GENOMIC DNA]</scope>
    <source>
        <strain>ATCC 18683 / 1980 / Ss-1</strain>
    </source>
</reference>
<organism>
    <name type="scientific">Sclerotinia sclerotiorum (strain ATCC 18683 / 1980 / Ss-1)</name>
    <name type="common">White mold</name>
    <name type="synonym">Whetzelinia sclerotiorum</name>
    <dbReference type="NCBI Taxonomy" id="665079"/>
    <lineage>
        <taxon>Eukaryota</taxon>
        <taxon>Fungi</taxon>
        <taxon>Dikarya</taxon>
        <taxon>Ascomycota</taxon>
        <taxon>Pezizomycotina</taxon>
        <taxon>Leotiomycetes</taxon>
        <taxon>Helotiales</taxon>
        <taxon>Sclerotiniaceae</taxon>
        <taxon>Sclerotinia</taxon>
    </lineage>
</organism>
<keyword id="KW-0007">Acetylation</keyword>
<keyword id="KW-0963">Cytoplasm</keyword>
<keyword id="KW-1185">Reference proteome</keyword>
<keyword id="KW-0687">Ribonucleoprotein</keyword>
<keyword id="KW-0689">Ribosomal protein</keyword>
<proteinExistence type="inferred from homology"/>
<evidence type="ECO:0000255" key="1">
    <source>
        <dbReference type="HAMAP-Rule" id="MF_03122"/>
    </source>
</evidence>
<evidence type="ECO:0000305" key="2"/>
<dbReference type="EMBL" id="CH476621">
    <property type="protein sequence ID" value="EDN90795.1"/>
    <property type="molecule type" value="Genomic_DNA"/>
</dbReference>
<dbReference type="RefSeq" id="XP_001598109.1">
    <property type="nucleotide sequence ID" value="XM_001598059.1"/>
</dbReference>
<dbReference type="SMR" id="A7E4H3"/>
<dbReference type="FunCoup" id="A7E4H3">
    <property type="interactions" value="1216"/>
</dbReference>
<dbReference type="STRING" id="665079.A7E4H3"/>
<dbReference type="EnsemblFungi" id="EDN90795">
    <property type="protein sequence ID" value="EDN90795"/>
    <property type="gene ID" value="SS1G_00195"/>
</dbReference>
<dbReference type="GeneID" id="5494723"/>
<dbReference type="KEGG" id="ssl:SS1G_00195"/>
<dbReference type="VEuPathDB" id="FungiDB:sscle_03g029030"/>
<dbReference type="eggNOG" id="KOG1628">
    <property type="taxonomic scope" value="Eukaryota"/>
</dbReference>
<dbReference type="HOGENOM" id="CLU_062507_0_0_1"/>
<dbReference type="InParanoid" id="A7E4H3"/>
<dbReference type="OMA" id="TRFKGHE"/>
<dbReference type="OrthoDB" id="9834376at2759"/>
<dbReference type="Proteomes" id="UP000001312">
    <property type="component" value="Unassembled WGS sequence"/>
</dbReference>
<dbReference type="GO" id="GO:0005829">
    <property type="term" value="C:cytosol"/>
    <property type="evidence" value="ECO:0000318"/>
    <property type="project" value="GO_Central"/>
</dbReference>
<dbReference type="GO" id="GO:0022627">
    <property type="term" value="C:cytosolic small ribosomal subunit"/>
    <property type="evidence" value="ECO:0007669"/>
    <property type="project" value="UniProtKB-UniRule"/>
</dbReference>
<dbReference type="GO" id="GO:0003735">
    <property type="term" value="F:structural constituent of ribosome"/>
    <property type="evidence" value="ECO:0007669"/>
    <property type="project" value="UniProtKB-UniRule"/>
</dbReference>
<dbReference type="GO" id="GO:0006412">
    <property type="term" value="P:translation"/>
    <property type="evidence" value="ECO:0007669"/>
    <property type="project" value="UniProtKB-UniRule"/>
</dbReference>
<dbReference type="HAMAP" id="MF_03122">
    <property type="entry name" value="Ribosomal_eS1_euk"/>
    <property type="match status" value="1"/>
</dbReference>
<dbReference type="InterPro" id="IPR001593">
    <property type="entry name" value="Ribosomal_eS1"/>
</dbReference>
<dbReference type="InterPro" id="IPR018281">
    <property type="entry name" value="Ribosomal_eS1_CS"/>
</dbReference>
<dbReference type="InterPro" id="IPR027500">
    <property type="entry name" value="Ribosomal_eS1_euk"/>
</dbReference>
<dbReference type="PANTHER" id="PTHR11830">
    <property type="entry name" value="40S RIBOSOMAL PROTEIN S3A"/>
    <property type="match status" value="1"/>
</dbReference>
<dbReference type="Pfam" id="PF01015">
    <property type="entry name" value="Ribosomal_S3Ae"/>
    <property type="match status" value="1"/>
</dbReference>
<dbReference type="SMART" id="SM01397">
    <property type="entry name" value="Ribosomal_S3Ae"/>
    <property type="match status" value="1"/>
</dbReference>
<dbReference type="PROSITE" id="PS01191">
    <property type="entry name" value="RIBOSOMAL_S3AE"/>
    <property type="match status" value="1"/>
</dbReference>
<protein>
    <recommendedName>
        <fullName evidence="1">Small ribosomal subunit protein eS1</fullName>
    </recommendedName>
    <alternativeName>
        <fullName evidence="2">40S ribosomal protein S1</fullName>
    </alternativeName>
</protein>